<evidence type="ECO:0000250" key="1"/>
<evidence type="ECO:0000250" key="2">
    <source>
        <dbReference type="UniProtKB" id="P61073"/>
    </source>
</evidence>
<evidence type="ECO:0000250" key="3">
    <source>
        <dbReference type="UniProtKB" id="P70658"/>
    </source>
</evidence>
<evidence type="ECO:0000255" key="4">
    <source>
        <dbReference type="PROSITE-ProRule" id="PRU00521"/>
    </source>
</evidence>
<evidence type="ECO:0000256" key="5">
    <source>
        <dbReference type="SAM" id="MobiDB-lite"/>
    </source>
</evidence>
<evidence type="ECO:0000305" key="6"/>
<dbReference type="EMBL" id="U73740">
    <property type="protein sequence ID" value="AAC51159.1"/>
    <property type="molecule type" value="mRNA"/>
</dbReference>
<dbReference type="EMBL" id="U93311">
    <property type="protein sequence ID" value="AAB54116.1"/>
    <property type="molecule type" value="mRNA"/>
</dbReference>
<dbReference type="EMBL" id="AF001928">
    <property type="protein sequence ID" value="AAC39641.1"/>
    <property type="molecule type" value="mRNA"/>
</dbReference>
<dbReference type="RefSeq" id="NP_001036110.1">
    <property type="nucleotide sequence ID" value="NM_001042645.1"/>
</dbReference>
<dbReference type="SMR" id="P79394"/>
<dbReference type="FunCoup" id="P79394">
    <property type="interactions" value="1495"/>
</dbReference>
<dbReference type="STRING" id="9544.ENSMMUP00000065812"/>
<dbReference type="BindingDB" id="P79394"/>
<dbReference type="ChEMBL" id="CHEMBL1250366"/>
<dbReference type="GlyCosmos" id="P79394">
    <property type="glycosylation" value="2 sites, No reported glycans"/>
</dbReference>
<dbReference type="PaxDb" id="9544-ENSMMUP00000036080"/>
<dbReference type="GeneID" id="707329"/>
<dbReference type="KEGG" id="mcc:707329"/>
<dbReference type="CTD" id="7852"/>
<dbReference type="eggNOG" id="KOG3656">
    <property type="taxonomic scope" value="Eukaryota"/>
</dbReference>
<dbReference type="InParanoid" id="P79394"/>
<dbReference type="OrthoDB" id="8413490at2759"/>
<dbReference type="Proteomes" id="UP000006718">
    <property type="component" value="Unassembled WGS sequence"/>
</dbReference>
<dbReference type="GO" id="GO:0070161">
    <property type="term" value="C:anchoring junction"/>
    <property type="evidence" value="ECO:0007669"/>
    <property type="project" value="UniProtKB-SubCell"/>
</dbReference>
<dbReference type="GO" id="GO:0005769">
    <property type="term" value="C:early endosome"/>
    <property type="evidence" value="ECO:0000250"/>
    <property type="project" value="UniProtKB"/>
</dbReference>
<dbReference type="GO" id="GO:0009897">
    <property type="term" value="C:external side of plasma membrane"/>
    <property type="evidence" value="ECO:0000318"/>
    <property type="project" value="GO_Central"/>
</dbReference>
<dbReference type="GO" id="GO:0005770">
    <property type="term" value="C:late endosome"/>
    <property type="evidence" value="ECO:0000250"/>
    <property type="project" value="UniProtKB"/>
</dbReference>
<dbReference type="GO" id="GO:0005764">
    <property type="term" value="C:lysosome"/>
    <property type="evidence" value="ECO:0000250"/>
    <property type="project" value="UniProtKB"/>
</dbReference>
<dbReference type="GO" id="GO:0005886">
    <property type="term" value="C:plasma membrane"/>
    <property type="evidence" value="ECO:0000250"/>
    <property type="project" value="UniProtKB"/>
</dbReference>
<dbReference type="GO" id="GO:0019957">
    <property type="term" value="F:C-C chemokine binding"/>
    <property type="evidence" value="ECO:0000318"/>
    <property type="project" value="GO_Central"/>
</dbReference>
<dbReference type="GO" id="GO:0016493">
    <property type="term" value="F:C-C chemokine receptor activity"/>
    <property type="evidence" value="ECO:0000318"/>
    <property type="project" value="GO_Central"/>
</dbReference>
<dbReference type="GO" id="GO:0038147">
    <property type="term" value="F:C-X-C motif chemokine 12 receptor activity"/>
    <property type="evidence" value="ECO:0000250"/>
    <property type="project" value="UniProtKB"/>
</dbReference>
<dbReference type="GO" id="GO:0007420">
    <property type="term" value="P:brain development"/>
    <property type="evidence" value="ECO:0000318"/>
    <property type="project" value="GO_Central"/>
</dbReference>
<dbReference type="GO" id="GO:0019722">
    <property type="term" value="P:calcium-mediated signaling"/>
    <property type="evidence" value="ECO:0000318"/>
    <property type="project" value="GO_Central"/>
</dbReference>
<dbReference type="GO" id="GO:0060326">
    <property type="term" value="P:cell chemotaxis"/>
    <property type="evidence" value="ECO:0000318"/>
    <property type="project" value="GO_Central"/>
</dbReference>
<dbReference type="GO" id="GO:0071345">
    <property type="term" value="P:cellular response to cytokine stimulus"/>
    <property type="evidence" value="ECO:0000250"/>
    <property type="project" value="UniProtKB"/>
</dbReference>
<dbReference type="GO" id="GO:0038160">
    <property type="term" value="P:CXCL12-activated CXCR4 signaling pathway"/>
    <property type="evidence" value="ECO:0000250"/>
    <property type="project" value="UniProtKB"/>
</dbReference>
<dbReference type="GO" id="GO:0006955">
    <property type="term" value="P:immune response"/>
    <property type="evidence" value="ECO:0000318"/>
    <property type="project" value="GO_Central"/>
</dbReference>
<dbReference type="GO" id="GO:0022008">
    <property type="term" value="P:neurogenesis"/>
    <property type="evidence" value="ECO:0000318"/>
    <property type="project" value="GO_Central"/>
</dbReference>
<dbReference type="GO" id="GO:0007204">
    <property type="term" value="P:positive regulation of cytosolic calcium ion concentration"/>
    <property type="evidence" value="ECO:0000318"/>
    <property type="project" value="GO_Central"/>
</dbReference>
<dbReference type="CDD" id="cd15179">
    <property type="entry name" value="7tmA_CXCR4"/>
    <property type="match status" value="1"/>
</dbReference>
<dbReference type="FunFam" id="1.20.1070.10:FF:000063">
    <property type="entry name" value="C-X-C chemokine receptor type 4"/>
    <property type="match status" value="1"/>
</dbReference>
<dbReference type="Gene3D" id="1.20.1070.10">
    <property type="entry name" value="Rhodopsin 7-helix transmembrane proteins"/>
    <property type="match status" value="1"/>
</dbReference>
<dbReference type="InterPro" id="IPR050119">
    <property type="entry name" value="CCR1-9-like"/>
</dbReference>
<dbReference type="InterPro" id="IPR022726">
    <property type="entry name" value="Chemokine_CXCR4_N_dom"/>
</dbReference>
<dbReference type="InterPro" id="IPR000355">
    <property type="entry name" value="Chemokine_rcpt"/>
</dbReference>
<dbReference type="InterPro" id="IPR001277">
    <property type="entry name" value="CXCR4/ACKR2"/>
</dbReference>
<dbReference type="InterPro" id="IPR000276">
    <property type="entry name" value="GPCR_Rhodpsn"/>
</dbReference>
<dbReference type="InterPro" id="IPR017452">
    <property type="entry name" value="GPCR_Rhodpsn_7TM"/>
</dbReference>
<dbReference type="PANTHER" id="PTHR10489:SF594">
    <property type="entry name" value="C-X-C CHEMOKINE RECEPTOR TYPE 4"/>
    <property type="match status" value="1"/>
</dbReference>
<dbReference type="PANTHER" id="PTHR10489">
    <property type="entry name" value="CELL ADHESION MOLECULE"/>
    <property type="match status" value="1"/>
</dbReference>
<dbReference type="Pfam" id="PF00001">
    <property type="entry name" value="7tm_1"/>
    <property type="match status" value="1"/>
</dbReference>
<dbReference type="Pfam" id="PF12109">
    <property type="entry name" value="CXCR4_N"/>
    <property type="match status" value="1"/>
</dbReference>
<dbReference type="PRINTS" id="PR00657">
    <property type="entry name" value="CCCHEMOKINER"/>
</dbReference>
<dbReference type="PRINTS" id="PR00645">
    <property type="entry name" value="CXCCHMKINER4"/>
</dbReference>
<dbReference type="PRINTS" id="PR00237">
    <property type="entry name" value="GPCRRHODOPSN"/>
</dbReference>
<dbReference type="SUPFAM" id="SSF81321">
    <property type="entry name" value="Family A G protein-coupled receptor-like"/>
    <property type="match status" value="1"/>
</dbReference>
<dbReference type="PROSITE" id="PS00237">
    <property type="entry name" value="G_PROTEIN_RECEP_F1_1"/>
    <property type="match status" value="1"/>
</dbReference>
<dbReference type="PROSITE" id="PS50262">
    <property type="entry name" value="G_PROTEIN_RECEP_F1_2"/>
    <property type="match status" value="1"/>
</dbReference>
<name>CXCR4_MACMU</name>
<sequence length="352" mass="39739">MEGISIYTSDNYTEEMGSGDYDSIKEPCFREENAHFNRIFLPTIYSIIFLTGIVGNGLVILVMGYQKKLRSMTDKYRLHLSVADLLFVITLPFWAVDAVANWYFGNFLCKAVHVIYTVNLYSSVLILAFISLDRYLAIVHATNSQKPRKLLAEKVVYVGVWIPALLLTIPDFIFASVSEADDRYICDRFYPNDLWVVVFQFQHIMVGLILPGIDILSCYCIIISKLSHSKGHQKRKALKTTVILILAFFACWLPYYIGISIDSFILLEIIKQGCEFENTVHKWISITEALAFFHCCLNPILYAFLGAKFKTSAQHALTSVSRGSSLKILSKGKRGGHSSVSTESESSSFHSS</sequence>
<proteinExistence type="evidence at transcript level"/>
<accession>P79394</accession>
<accession>O02745</accession>
<accession>O46428</accession>
<feature type="chain" id="PRO_0000069354" description="C-X-C chemokine receptor type 4">
    <location>
        <begin position="1"/>
        <end position="352"/>
    </location>
</feature>
<feature type="topological domain" description="Extracellular" evidence="6">
    <location>
        <begin position="1"/>
        <end position="38"/>
    </location>
</feature>
<feature type="transmembrane region" description="Helical; Name=1" evidence="2">
    <location>
        <begin position="39"/>
        <end position="63"/>
    </location>
</feature>
<feature type="topological domain" description="Cytoplasmic" evidence="6">
    <location>
        <begin position="64"/>
        <end position="77"/>
    </location>
</feature>
<feature type="transmembrane region" description="Helical; Name=2" evidence="2">
    <location>
        <begin position="78"/>
        <end position="99"/>
    </location>
</feature>
<feature type="topological domain" description="Extracellular" evidence="6">
    <location>
        <begin position="100"/>
        <end position="110"/>
    </location>
</feature>
<feature type="transmembrane region" description="Helical; Name=3" evidence="2">
    <location>
        <begin position="111"/>
        <end position="130"/>
    </location>
</feature>
<feature type="topological domain" description="Cytoplasmic" evidence="6">
    <location>
        <begin position="131"/>
        <end position="154"/>
    </location>
</feature>
<feature type="transmembrane region" description="Helical; Name=4" evidence="2">
    <location>
        <begin position="155"/>
        <end position="174"/>
    </location>
</feature>
<feature type="topological domain" description="Extracellular" evidence="6">
    <location>
        <begin position="175"/>
        <end position="195"/>
    </location>
</feature>
<feature type="transmembrane region" description="Helical; Name=5" evidence="2">
    <location>
        <begin position="196"/>
        <end position="216"/>
    </location>
</feature>
<feature type="topological domain" description="Cytoplasmic" evidence="6">
    <location>
        <begin position="217"/>
        <end position="241"/>
    </location>
</feature>
<feature type="transmembrane region" description="Helical; Name=6" evidence="2">
    <location>
        <begin position="242"/>
        <end position="261"/>
    </location>
</feature>
<feature type="topological domain" description="Extracellular" evidence="6">
    <location>
        <begin position="262"/>
        <end position="282"/>
    </location>
</feature>
<feature type="transmembrane region" description="Helical; Name=7" evidence="2">
    <location>
        <begin position="283"/>
        <end position="302"/>
    </location>
</feature>
<feature type="topological domain" description="Cytoplasmic" evidence="6">
    <location>
        <begin position="303"/>
        <end position="352"/>
    </location>
</feature>
<feature type="region of interest" description="Important for chemokine binding and signaling" evidence="1">
    <location>
        <begin position="1"/>
        <end position="21"/>
    </location>
</feature>
<feature type="region of interest" description="Chemokine binding" evidence="1">
    <location>
        <begin position="94"/>
        <end position="97"/>
    </location>
</feature>
<feature type="region of interest" description="Chemokine binding" evidence="1">
    <location>
        <begin position="113"/>
        <end position="117"/>
    </location>
</feature>
<feature type="region of interest" description="Involved in dimerization; when bound to chemokine" evidence="1">
    <location>
        <begin position="135"/>
        <end position="147"/>
    </location>
</feature>
<feature type="region of interest" description="Chemokine binding, important for signaling" evidence="1">
    <location>
        <begin position="186"/>
        <end position="190"/>
    </location>
</feature>
<feature type="region of interest" description="Involved in dimerization" evidence="1">
    <location>
        <begin position="191"/>
        <end position="210"/>
    </location>
</feature>
<feature type="region of interest" description="Involved in dimerization" evidence="1">
    <location>
        <begin position="266"/>
        <end position="268"/>
    </location>
</feature>
<feature type="region of interest" description="Disordered" evidence="5">
    <location>
        <begin position="329"/>
        <end position="352"/>
    </location>
</feature>
<feature type="short sequence motif" description="Important for signaling" evidence="1">
    <location>
        <begin position="133"/>
        <end position="135"/>
    </location>
</feature>
<feature type="compositionally biased region" description="Low complexity" evidence="5">
    <location>
        <begin position="337"/>
        <end position="352"/>
    </location>
</feature>
<feature type="site" description="Chemokine" evidence="1">
    <location>
        <position position="171"/>
    </location>
</feature>
<feature type="site" description="Chemokine" evidence="1">
    <location>
        <position position="288"/>
    </location>
</feature>
<feature type="modified residue" description="Sulfotyrosine" evidence="2">
    <location>
        <position position="7"/>
    </location>
</feature>
<feature type="modified residue" description="Sulfotyrosine" evidence="2">
    <location>
        <position position="12"/>
    </location>
</feature>
<feature type="modified residue" description="Sulfotyrosine" evidence="2">
    <location>
        <position position="21"/>
    </location>
</feature>
<feature type="modified residue" description="Phosphoserine" evidence="2">
    <location>
        <position position="319"/>
    </location>
</feature>
<feature type="modified residue" description="Phosphoserine" evidence="2">
    <location>
        <position position="321"/>
    </location>
</feature>
<feature type="modified residue" description="Phosphoserine; by PKC and GRK6" evidence="2">
    <location>
        <position position="324"/>
    </location>
</feature>
<feature type="modified residue" description="Phosphoserine; by PKC and GRK6" evidence="2">
    <location>
        <position position="325"/>
    </location>
</feature>
<feature type="modified residue" description="Phosphoserine; by GRK6" evidence="2">
    <location>
        <position position="330"/>
    </location>
</feature>
<feature type="modified residue" description="Phosphoserine; by GRK6" evidence="2">
    <location>
        <position position="339"/>
    </location>
</feature>
<feature type="modified residue" description="Phosphoserine" evidence="2">
    <location>
        <position position="348"/>
    </location>
</feature>
<feature type="modified residue" description="Phosphoserine" evidence="2">
    <location>
        <position position="351"/>
    </location>
</feature>
<feature type="glycosylation site" description="N-linked (GlcNAc...) asparagine" evidence="1">
    <location>
        <position position="11"/>
    </location>
</feature>
<feature type="glycosylation site" description="O-linked (Xyl...) (chondroitin sulfate) serine" evidence="2">
    <location>
        <position position="18"/>
    </location>
</feature>
<feature type="disulfide bond" evidence="4">
    <location>
        <begin position="28"/>
        <end position="274"/>
    </location>
</feature>
<feature type="disulfide bond" evidence="4">
    <location>
        <begin position="109"/>
        <end position="186"/>
    </location>
</feature>
<feature type="cross-link" description="Glycyl lysine isopeptide (Lys-Gly) (interchain with G-Cter in ubiquitin)" evidence="2">
    <location>
        <position position="331"/>
    </location>
</feature>
<feature type="sequence conflict" description="In Ref. 2; AAB54116." evidence="6" ref="2">
    <original>K</original>
    <variation>E</variation>
    <location>
        <position position="67"/>
    </location>
</feature>
<feature type="sequence conflict" description="In Ref. 2; AAB54116 and 3; AAC39641." evidence="6" ref="2 3">
    <original>D</original>
    <variation>V</variation>
    <location>
        <position position="214"/>
    </location>
</feature>
<feature type="sequence conflict" description="In Ref. 2; AAB54116." evidence="6" ref="2">
    <original>S</original>
    <variation>N</variation>
    <location>
        <position position="348"/>
    </location>
</feature>
<comment type="function">
    <text evidence="2 3">Receptor for the C-X-C chemokine CXCL12/SDF-1 that transduces a signal by increasing intracellular calcium ion levels and enhancing MAPK1/MAPK3 activation. Involved in the AKT signaling cascade (By similarity). Plays a role in regulation of cell migration, e.g. during wound healing. Acts as a receptor for extracellular ubiquitin; leading to enhanced intracellular calcium ions and reduced cellular cAMP levels. Binds bacterial lipopolysaccharide (LPS) et mediates LPS-induced inflammatory response, including TNF secretion by monocytes (By similarity). Involved in hematopoiesis and in cardiac ventricular septum formation. Also plays an essential role in vascularization of the gastrointestinal tract, probably by regulating vascular branching and/or remodeling processes in endothelial cells. Involved in cerebellar development. In the CNS, could mediate hippocampal-neuron survival (By similarity).</text>
</comment>
<comment type="subunit">
    <text evidence="2">Monomer. Can form homodimers. Interacts with CD164. Interacts with ARRB2; the interaction is dependent on the C-terminal phosphorylation of CXCR4 and allows activation of MAPK1 and MAPK3. Interacts with ARR3; the interaction is dependent on the C-terminal phosphorylation of CXCR4 and modulates calcium mobilization. Interacts with RNF113A; the interaction, enhanced by CXCL12, promotes CXCR4 ubiquitination and subsequent degradation. Interacts (via the cytoplasmic C-terminal) with ITCH (via the WW domains I and II); the interaction, enhanced by CXCL12, promotes CXCR4 ubiquitination and leads to its degradation. Interacts with extracellular ubiquitin. Interacts with DBN1; this interaction is enhanced by antigenic stimulation. Following LPS binding, may form a complex with GDF5, HSP90AA1 and HSPA8.</text>
</comment>
<comment type="subcellular location">
    <subcellularLocation>
        <location evidence="2">Cell membrane</location>
        <topology evidence="2">Multi-pass membrane protein</topology>
    </subcellularLocation>
    <subcellularLocation>
        <location evidence="1">Cell junction</location>
    </subcellularLocation>
    <subcellularLocation>
        <location evidence="1">Early endosome</location>
    </subcellularLocation>
    <subcellularLocation>
        <location evidence="1">Late endosome</location>
    </subcellularLocation>
    <subcellularLocation>
        <location evidence="1">Lysosome</location>
    </subcellularLocation>
    <text evidence="1">In unstimulated cells, diffuse pattern on plasma membrane. On agonist stimulation, colocalizes with ITCH at the plasma membrane where it becomes ubiquitinated (By similarity). In the presence of antigen, distributes to the immunological synapse forming at the T-cell-APC contact area, where it localizes at the peripheral and distal supramolecular activation cluster (SMAC) (By similarity).</text>
</comment>
<comment type="PTM">
    <text evidence="2">Phosphorylated on agonist stimulation. Rapidly phosphorylated on serine and threonine residues in the C-terminal. Phosphorylation at Ser-324 and Ser-325 leads to recruitment of ITCH, ubiquitination and protein degradation.</text>
</comment>
<comment type="PTM">
    <text evidence="2">Ubiquitinated after ligand binding, leading to its degradation. Ubiquitinated by ITCH at the cell membrane on agonist stimulation. The ubiquitin-dependent mechanism, endosomal sorting complex required for transport (ESCRT), then targets CXCR4 for lysosomal degradation. This process is dependent also on prior Ser-/Thr-phosphorylation in the C-terminal of CXCR4. Also binding of ARRB1 to STAM negatively regulates CXCR4 sorting to lysosomes though modulating ubiquitination of SFR5S.</text>
</comment>
<comment type="PTM">
    <text evidence="2">Sulfation is required for efficient binding of CXCL12/SDF-1alpha and promotes its dimerization.</text>
</comment>
<comment type="PTM">
    <text evidence="2">O- and N-glycosylated. N-glycosylation can mask coreceptor function. The O-glycosylation chondroitin sulfate attachment does not affect interaction with CXCL12/SDF-1alpha nor its coreceptor activity.</text>
</comment>
<comment type="similarity">
    <text evidence="4">Belongs to the G-protein coupled receptor 1 family.</text>
</comment>
<gene>
    <name type="primary">CXCR4</name>
</gene>
<organism>
    <name type="scientific">Macaca mulatta</name>
    <name type="common">Rhesus macaque</name>
    <dbReference type="NCBI Taxonomy" id="9544"/>
    <lineage>
        <taxon>Eukaryota</taxon>
        <taxon>Metazoa</taxon>
        <taxon>Chordata</taxon>
        <taxon>Craniata</taxon>
        <taxon>Vertebrata</taxon>
        <taxon>Euteleostomi</taxon>
        <taxon>Mammalia</taxon>
        <taxon>Eutheria</taxon>
        <taxon>Euarchontoglires</taxon>
        <taxon>Primates</taxon>
        <taxon>Haplorrhini</taxon>
        <taxon>Catarrhini</taxon>
        <taxon>Cercopithecidae</taxon>
        <taxon>Cercopithecinae</taxon>
        <taxon>Macaca</taxon>
    </lineage>
</organism>
<protein>
    <recommendedName>
        <fullName>C-X-C chemokine receptor type 4</fullName>
        <shortName>CXC-R4</shortName>
        <shortName>CXCR-4</shortName>
    </recommendedName>
    <alternativeName>
        <fullName>Fusin</fullName>
    </alternativeName>
    <alternativeName>
        <fullName>Leukocyte-derived seven transmembrane domain receptor</fullName>
        <shortName>LESTR</shortName>
    </alternativeName>
    <alternativeName>
        <fullName>Stromal cell-derived factor 1 receptor</fullName>
        <shortName>SDF-1 receptor</shortName>
    </alternativeName>
    <cdAntigenName>CD184</cdAntigenName>
</protein>
<reference key="1">
    <citation type="journal article" date="1997" name="J. Virol.">
        <title>Genetically divergent strains of simian immunodeficiency virus use CCR5 as a coreceptor for entry.</title>
        <authorList>
            <person name="Chen Z."/>
            <person name="Zhou P."/>
            <person name="Ho D.D."/>
            <person name="Landau N.R."/>
            <person name="Marx P.A."/>
        </authorList>
    </citation>
    <scope>NUCLEOTIDE SEQUENCE [MRNA]</scope>
    <source>
        <strain>Indian macaque</strain>
    </source>
</reference>
<reference key="2">
    <citation type="journal article" date="1997" name="Proc. Natl. Acad. Sci. U.S.A.">
        <title>Differential utilization of CCR5 by macrophage and T cell tropic simian immunodeficiency virus strains.</title>
        <authorList>
            <person name="Edinger A.L."/>
            <person name="Amedee A."/>
            <person name="Miller K."/>
            <person name="Doranz B.J."/>
            <person name="Endres M."/>
            <person name="Sharron M."/>
            <person name="Samson M."/>
            <person name="Lu Z.-H."/>
            <person name="Clements J.E."/>
            <person name="Murphey-Corb M."/>
            <person name="Peiper S.C."/>
            <person name="Parmentier M."/>
            <person name="Broder C.C."/>
            <person name="Doms R.W."/>
        </authorList>
    </citation>
    <scope>NUCLEOTIDE SEQUENCE [MRNA]</scope>
</reference>
<reference key="3">
    <citation type="journal article" date="1998" name="AIDS Res. Hum. Retroviruses">
        <title>New widespread CXCR4 allele in rhesus macaques does not predict subspecies or clinical evolution.</title>
        <authorList>
            <person name="Pretet J.-L."/>
            <person name="Guillet J.-G."/>
            <person name="Butor C."/>
        </authorList>
    </citation>
    <scope>NUCLEOTIDE SEQUENCE [MRNA]</scope>
    <source>
        <strain>Chinese</strain>
    </source>
</reference>
<keyword id="KW-0965">Cell junction</keyword>
<keyword id="KW-1003">Cell membrane</keyword>
<keyword id="KW-1015">Disulfide bond</keyword>
<keyword id="KW-0967">Endosome</keyword>
<keyword id="KW-0297">G-protein coupled receptor</keyword>
<keyword id="KW-0325">Glycoprotein</keyword>
<keyword id="KW-1017">Isopeptide bond</keyword>
<keyword id="KW-0458">Lysosome</keyword>
<keyword id="KW-0472">Membrane</keyword>
<keyword id="KW-0597">Phosphoprotein</keyword>
<keyword id="KW-0654">Proteoglycan</keyword>
<keyword id="KW-0675">Receptor</keyword>
<keyword id="KW-1185">Reference proteome</keyword>
<keyword id="KW-0765">Sulfation</keyword>
<keyword id="KW-0807">Transducer</keyword>
<keyword id="KW-0812">Transmembrane</keyword>
<keyword id="KW-1133">Transmembrane helix</keyword>
<keyword id="KW-0832">Ubl conjugation</keyword>